<dbReference type="EMBL" id="CP000964">
    <property type="protein sequence ID" value="ACI11756.1"/>
    <property type="molecule type" value="Genomic_DNA"/>
</dbReference>
<dbReference type="SMR" id="B5XTG7"/>
<dbReference type="KEGG" id="kpe:KPK_0118"/>
<dbReference type="HOGENOM" id="CLU_190949_1_1_6"/>
<dbReference type="Proteomes" id="UP000001734">
    <property type="component" value="Chromosome"/>
</dbReference>
<dbReference type="GO" id="GO:0022625">
    <property type="term" value="C:cytosolic large ribosomal subunit"/>
    <property type="evidence" value="ECO:0007669"/>
    <property type="project" value="TreeGrafter"/>
</dbReference>
<dbReference type="GO" id="GO:0003735">
    <property type="term" value="F:structural constituent of ribosome"/>
    <property type="evidence" value="ECO:0007669"/>
    <property type="project" value="InterPro"/>
</dbReference>
<dbReference type="GO" id="GO:0006412">
    <property type="term" value="P:translation"/>
    <property type="evidence" value="ECO:0007669"/>
    <property type="project" value="UniProtKB-UniRule"/>
</dbReference>
<dbReference type="FunFam" id="2.20.28.120:FF:000001">
    <property type="entry name" value="50S ribosomal protein L33"/>
    <property type="match status" value="1"/>
</dbReference>
<dbReference type="Gene3D" id="2.20.28.120">
    <property type="entry name" value="Ribosomal protein L33"/>
    <property type="match status" value="1"/>
</dbReference>
<dbReference type="HAMAP" id="MF_00294">
    <property type="entry name" value="Ribosomal_bL33"/>
    <property type="match status" value="1"/>
</dbReference>
<dbReference type="InterPro" id="IPR001705">
    <property type="entry name" value="Ribosomal_bL33"/>
</dbReference>
<dbReference type="InterPro" id="IPR018264">
    <property type="entry name" value="Ribosomal_bL33_CS"/>
</dbReference>
<dbReference type="InterPro" id="IPR038584">
    <property type="entry name" value="Ribosomal_bL33_sf"/>
</dbReference>
<dbReference type="InterPro" id="IPR011332">
    <property type="entry name" value="Ribosomal_zn-bd"/>
</dbReference>
<dbReference type="NCBIfam" id="NF001860">
    <property type="entry name" value="PRK00595.1"/>
    <property type="match status" value="1"/>
</dbReference>
<dbReference type="NCBIfam" id="TIGR01023">
    <property type="entry name" value="rpmG_bact"/>
    <property type="match status" value="1"/>
</dbReference>
<dbReference type="PANTHER" id="PTHR15238">
    <property type="entry name" value="54S RIBOSOMAL PROTEIN L39, MITOCHONDRIAL"/>
    <property type="match status" value="1"/>
</dbReference>
<dbReference type="PANTHER" id="PTHR15238:SF1">
    <property type="entry name" value="LARGE RIBOSOMAL SUBUNIT PROTEIN BL33M"/>
    <property type="match status" value="1"/>
</dbReference>
<dbReference type="Pfam" id="PF00471">
    <property type="entry name" value="Ribosomal_L33"/>
    <property type="match status" value="1"/>
</dbReference>
<dbReference type="SUPFAM" id="SSF57829">
    <property type="entry name" value="Zn-binding ribosomal proteins"/>
    <property type="match status" value="1"/>
</dbReference>
<dbReference type="PROSITE" id="PS00582">
    <property type="entry name" value="RIBOSOMAL_L33"/>
    <property type="match status" value="1"/>
</dbReference>
<proteinExistence type="inferred from homology"/>
<keyword id="KW-0687">Ribonucleoprotein</keyword>
<keyword id="KW-0689">Ribosomal protein</keyword>
<comment type="similarity">
    <text evidence="1">Belongs to the bacterial ribosomal protein bL33 family.</text>
</comment>
<protein>
    <recommendedName>
        <fullName evidence="1">Large ribosomal subunit protein bL33</fullName>
    </recommendedName>
    <alternativeName>
        <fullName evidence="2">50S ribosomal protein L33</fullName>
    </alternativeName>
</protein>
<reference key="1">
    <citation type="journal article" date="2008" name="PLoS Genet.">
        <title>Complete genome sequence of the N2-fixing broad host range endophyte Klebsiella pneumoniae 342 and virulence predictions verified in mice.</title>
        <authorList>
            <person name="Fouts D.E."/>
            <person name="Tyler H.L."/>
            <person name="DeBoy R.T."/>
            <person name="Daugherty S."/>
            <person name="Ren Q."/>
            <person name="Badger J.H."/>
            <person name="Durkin A.S."/>
            <person name="Huot H."/>
            <person name="Shrivastava S."/>
            <person name="Kothari S."/>
            <person name="Dodson R.J."/>
            <person name="Mohamoud Y."/>
            <person name="Khouri H."/>
            <person name="Roesch L.F.W."/>
            <person name="Krogfelt K.A."/>
            <person name="Struve C."/>
            <person name="Triplett E.W."/>
            <person name="Methe B.A."/>
        </authorList>
    </citation>
    <scope>NUCLEOTIDE SEQUENCE [LARGE SCALE GENOMIC DNA]</scope>
    <source>
        <strain>342</strain>
    </source>
</reference>
<name>RL33_KLEP3</name>
<evidence type="ECO:0000255" key="1">
    <source>
        <dbReference type="HAMAP-Rule" id="MF_00294"/>
    </source>
</evidence>
<evidence type="ECO:0000305" key="2"/>
<accession>B5XTG7</accession>
<organism>
    <name type="scientific">Klebsiella pneumoniae (strain 342)</name>
    <dbReference type="NCBI Taxonomy" id="507522"/>
    <lineage>
        <taxon>Bacteria</taxon>
        <taxon>Pseudomonadati</taxon>
        <taxon>Pseudomonadota</taxon>
        <taxon>Gammaproteobacteria</taxon>
        <taxon>Enterobacterales</taxon>
        <taxon>Enterobacteriaceae</taxon>
        <taxon>Klebsiella/Raoultella group</taxon>
        <taxon>Klebsiella</taxon>
        <taxon>Klebsiella pneumoniae complex</taxon>
    </lineage>
</organism>
<gene>
    <name evidence="1" type="primary">rpmG</name>
    <name type="ordered locus">KPK_0118</name>
</gene>
<sequence>MAKGIREKIKLVSSAGTGHFYTTTKNKRTKPEKMELKKYDPVVRQHVIYKEAKIK</sequence>
<feature type="chain" id="PRO_1000115136" description="Large ribosomal subunit protein bL33">
    <location>
        <begin position="1"/>
        <end position="55"/>
    </location>
</feature>